<feature type="chain" id="PRO_0000171193" description="Serine/threonine-protein kinase PknD">
    <location>
        <begin position="1"/>
        <end position="934"/>
    </location>
</feature>
<feature type="domain" description="Protein kinase" evidence="2">
    <location>
        <begin position="4"/>
        <end position="296"/>
    </location>
</feature>
<feature type="active site" description="Proton acceptor" evidence="2">
    <location>
        <position position="138"/>
    </location>
</feature>
<feature type="binding site" evidence="2">
    <location>
        <begin position="10"/>
        <end position="18"/>
    </location>
    <ligand>
        <name>ATP</name>
        <dbReference type="ChEBI" id="CHEBI:30616"/>
    </ligand>
</feature>
<feature type="binding site" evidence="2">
    <location>
        <position position="33"/>
    </location>
    <ligand>
        <name>ATP</name>
        <dbReference type="ChEBI" id="CHEBI:30616"/>
    </ligand>
</feature>
<name>PKND_CHLTR</name>
<accession>P0DPS8</accession>
<accession>B0B7L7</accession>
<accession>O84303</accession>
<accession>Q8GDH7</accession>
<dbReference type="EC" id="2.7.11.1" evidence="2"/>
<dbReference type="EMBL" id="AE001273">
    <property type="protein sequence ID" value="AAC67894.1"/>
    <property type="molecule type" value="Genomic_DNA"/>
</dbReference>
<dbReference type="PIR" id="G71532">
    <property type="entry name" value="G71532"/>
</dbReference>
<dbReference type="RefSeq" id="NP_219806.1">
    <property type="nucleotide sequence ID" value="NC_000117.1"/>
</dbReference>
<dbReference type="RefSeq" id="WP_009871648.1">
    <property type="nucleotide sequence ID" value="NC_000117.1"/>
</dbReference>
<dbReference type="SMR" id="P0DPS8"/>
<dbReference type="STRING" id="272561.CT_301"/>
<dbReference type="EnsemblBacteria" id="AAC67894">
    <property type="protein sequence ID" value="AAC67894"/>
    <property type="gene ID" value="CT_301"/>
</dbReference>
<dbReference type="GeneID" id="884825"/>
<dbReference type="KEGG" id="ctr:CT_301"/>
<dbReference type="InParanoid" id="P0DPS8"/>
<dbReference type="OrthoDB" id="9788659at2"/>
<dbReference type="Proteomes" id="UP000000431">
    <property type="component" value="Chromosome"/>
</dbReference>
<dbReference type="GO" id="GO:0005524">
    <property type="term" value="F:ATP binding"/>
    <property type="evidence" value="ECO:0007669"/>
    <property type="project" value="UniProtKB-KW"/>
</dbReference>
<dbReference type="GO" id="GO:0106310">
    <property type="term" value="F:protein serine kinase activity"/>
    <property type="evidence" value="ECO:0007669"/>
    <property type="project" value="RHEA"/>
</dbReference>
<dbReference type="GO" id="GO:0004674">
    <property type="term" value="F:protein serine/threonine kinase activity"/>
    <property type="evidence" value="ECO:0000318"/>
    <property type="project" value="GO_Central"/>
</dbReference>
<dbReference type="CDD" id="cd14014">
    <property type="entry name" value="STKc_PknB_like"/>
    <property type="match status" value="1"/>
</dbReference>
<dbReference type="Gene3D" id="3.30.200.20">
    <property type="entry name" value="Phosphorylase Kinase, domain 1"/>
    <property type="match status" value="1"/>
</dbReference>
<dbReference type="Gene3D" id="1.25.40.10">
    <property type="entry name" value="Tetratricopeptide repeat domain"/>
    <property type="match status" value="1"/>
</dbReference>
<dbReference type="Gene3D" id="1.10.510.10">
    <property type="entry name" value="Transferase(Phosphotransferase) domain 1"/>
    <property type="match status" value="1"/>
</dbReference>
<dbReference type="HAMAP" id="MF_01957">
    <property type="entry name" value="PknD_kinase"/>
    <property type="match status" value="1"/>
</dbReference>
<dbReference type="InterPro" id="IPR011009">
    <property type="entry name" value="Kinase-like_dom_sf"/>
</dbReference>
<dbReference type="InterPro" id="IPR000719">
    <property type="entry name" value="Prot_kinase_dom"/>
</dbReference>
<dbReference type="InterPro" id="IPR017441">
    <property type="entry name" value="Protein_kinase_ATP_BS"/>
</dbReference>
<dbReference type="InterPro" id="IPR008271">
    <property type="entry name" value="Ser/Thr_kinase_AS"/>
</dbReference>
<dbReference type="InterPro" id="IPR023507">
    <property type="entry name" value="Ser/Thr_kinase_PknD"/>
</dbReference>
<dbReference type="InterPro" id="IPR011990">
    <property type="entry name" value="TPR-like_helical_dom_sf"/>
</dbReference>
<dbReference type="NCBIfam" id="NF009651">
    <property type="entry name" value="PRK13184.1"/>
    <property type="match status" value="1"/>
</dbReference>
<dbReference type="PANTHER" id="PTHR43289">
    <property type="entry name" value="MITOGEN-ACTIVATED PROTEIN KINASE KINASE KINASE 20-RELATED"/>
    <property type="match status" value="1"/>
</dbReference>
<dbReference type="PANTHER" id="PTHR43289:SF34">
    <property type="entry name" value="SERINE_THREONINE-PROTEIN KINASE YBDM-RELATED"/>
    <property type="match status" value="1"/>
</dbReference>
<dbReference type="Pfam" id="PF00069">
    <property type="entry name" value="Pkinase"/>
    <property type="match status" value="1"/>
</dbReference>
<dbReference type="SMART" id="SM00220">
    <property type="entry name" value="S_TKc"/>
    <property type="match status" value="1"/>
</dbReference>
<dbReference type="SUPFAM" id="SSF56112">
    <property type="entry name" value="Protein kinase-like (PK-like)"/>
    <property type="match status" value="1"/>
</dbReference>
<dbReference type="PROSITE" id="PS00107">
    <property type="entry name" value="PROTEIN_KINASE_ATP"/>
    <property type="match status" value="1"/>
</dbReference>
<dbReference type="PROSITE" id="PS50011">
    <property type="entry name" value="PROTEIN_KINASE_DOM"/>
    <property type="match status" value="1"/>
</dbReference>
<dbReference type="PROSITE" id="PS00108">
    <property type="entry name" value="PROTEIN_KINASE_ST"/>
    <property type="match status" value="1"/>
</dbReference>
<reference key="1">
    <citation type="journal article" date="1998" name="Science">
        <title>Genome sequence of an obligate intracellular pathogen of humans: Chlamydia trachomatis.</title>
        <authorList>
            <person name="Stephens R.S."/>
            <person name="Kalman S."/>
            <person name="Lammel C.J."/>
            <person name="Fan J."/>
            <person name="Marathe R."/>
            <person name="Aravind L."/>
            <person name="Mitchell W.P."/>
            <person name="Olinger L."/>
            <person name="Tatusov R.L."/>
            <person name="Zhao Q."/>
            <person name="Koonin E.V."/>
            <person name="Davis R.W."/>
        </authorList>
    </citation>
    <scope>NUCLEOTIDE SEQUENCE [LARGE SCALE GENOMIC DNA]</scope>
    <source>
        <strain>ATCC VR-885 / DSM 19411 / UW-3/Cx</strain>
    </source>
</reference>
<protein>
    <recommendedName>
        <fullName evidence="2">Serine/threonine-protein kinase PknD</fullName>
        <ecNumber evidence="2">2.7.11.1</ecNumber>
    </recommendedName>
</protein>
<keyword id="KW-0067">ATP-binding</keyword>
<keyword id="KW-0418">Kinase</keyword>
<keyword id="KW-0547">Nucleotide-binding</keyword>
<keyword id="KW-0597">Phosphoprotein</keyword>
<keyword id="KW-1185">Reference proteome</keyword>
<keyword id="KW-0723">Serine/threonine-protein kinase</keyword>
<keyword id="KW-0808">Transferase</keyword>
<proteinExistence type="inferred from homology"/>
<gene>
    <name evidence="2" type="primary">pknD</name>
    <name type="ordered locus">CT_301</name>
</gene>
<comment type="function">
    <text evidence="1 2">Together with the serine/threonine kinase Pkn1, may play a role in the specific interactions with host proteins during intracellular growth (By similarity). Autophosphorylates and also phosphorylates Pkn1 (By similarity).</text>
</comment>
<comment type="catalytic activity">
    <reaction evidence="2">
        <text>L-seryl-[protein] + ATP = O-phospho-L-seryl-[protein] + ADP + H(+)</text>
        <dbReference type="Rhea" id="RHEA:17989"/>
        <dbReference type="Rhea" id="RHEA-COMP:9863"/>
        <dbReference type="Rhea" id="RHEA-COMP:11604"/>
        <dbReference type="ChEBI" id="CHEBI:15378"/>
        <dbReference type="ChEBI" id="CHEBI:29999"/>
        <dbReference type="ChEBI" id="CHEBI:30616"/>
        <dbReference type="ChEBI" id="CHEBI:83421"/>
        <dbReference type="ChEBI" id="CHEBI:456216"/>
        <dbReference type="EC" id="2.7.11.1"/>
    </reaction>
</comment>
<comment type="catalytic activity">
    <reaction evidence="2">
        <text>L-threonyl-[protein] + ATP = O-phospho-L-threonyl-[protein] + ADP + H(+)</text>
        <dbReference type="Rhea" id="RHEA:46608"/>
        <dbReference type="Rhea" id="RHEA-COMP:11060"/>
        <dbReference type="Rhea" id="RHEA-COMP:11605"/>
        <dbReference type="ChEBI" id="CHEBI:15378"/>
        <dbReference type="ChEBI" id="CHEBI:30013"/>
        <dbReference type="ChEBI" id="CHEBI:30616"/>
        <dbReference type="ChEBI" id="CHEBI:61977"/>
        <dbReference type="ChEBI" id="CHEBI:456216"/>
        <dbReference type="EC" id="2.7.11.1"/>
    </reaction>
</comment>
<comment type="subunit">
    <text evidence="1">Interacts with Pkn1.</text>
</comment>
<comment type="PTM">
    <text evidence="1 2">Autophosphorylated on serine and threonine residues.</text>
</comment>
<comment type="similarity">
    <text evidence="2">Belongs to the protein kinase superfamily. Ser/Thr protein kinase family.</text>
</comment>
<organism>
    <name type="scientific">Chlamydia trachomatis serovar D (strain ATCC VR-885 / DSM 19411 / UW-3/Cx)</name>
    <dbReference type="NCBI Taxonomy" id="272561"/>
    <lineage>
        <taxon>Bacteria</taxon>
        <taxon>Pseudomonadati</taxon>
        <taxon>Chlamydiota</taxon>
        <taxon>Chlamydiia</taxon>
        <taxon>Chlamydiales</taxon>
        <taxon>Chlamydiaceae</taxon>
        <taxon>Chlamydia/Chlamydophila group</taxon>
        <taxon>Chlamydia</taxon>
    </lineage>
</organism>
<evidence type="ECO:0000250" key="1">
    <source>
        <dbReference type="UniProtKB" id="B0B7L7"/>
    </source>
</evidence>
<evidence type="ECO:0000255" key="2">
    <source>
        <dbReference type="HAMAP-Rule" id="MF_01957"/>
    </source>
</evidence>
<sequence length="934" mass="107666">MQRYELIRLIGKGGMGEVYLAHDKACSRRVALKRIREDLSGNALLRQRFLREAKIAADLIHPGIVPVYSICSDGEAVYYTMPYIEGFSLKSLLKSVWQKEVLSKELEEKTSVKSFLPIFDKICATVEYIHSKGVLHRDLKPDNILLGLFGEVVIIDWGAAIFKHAKELKLEQDDEAAVSFDERNICYSSMTIPGKIVGTPDYMAPESLLGVEASEKTDIYALGLILYQMLTLAFPYRRKKGRKLSYRDVVLPPIEMSPYREIPPSLSQIAMKAIAINPADRFSSIQELRQALQPYLQGDPEWTVKATLMAKEKSCWKYYDPILLSRYFPVLASSPAQWYNFMLSEVEISASTRVEYTVTKSAVHEGMGILFLPSKEAERGEFYCGYGLWFSVQNHELTVSLIKNGIEIQKKSQEMISQQSRFAILIEKSDNRIAVFVEQALFILHIDYLPSLGNRLGVIIQDLQGMSNIAISESIGALRVSCLAVPDAFLSEKLYDQAAIFYRKIRDSFPGRKESYEAQFRLGVTLLTQIEEQGGDLTQALSSFDYLHGGAGAPLEYLGKALVYQRNGSFVEEIRCLLFALKRYSQHPEIPRLEDHLCFRLYDSLHKHRSEALVFMLLILWIAPEKISVREEERFLRIIYHKQQATLFCQVDKAPLQFRSSKMELFLSFWTGFSLFLPELFRRAGGLRDYQALADIFYVAGVSGNREAFMQFSTALANVSDEITFPESLHNQKVAELMFFVKGVEALRNKDYQKAKKLLWKTPFTLQLYALDMFHIQAFLDEEIESFIDLLQAIYDPASEEERDHILVYIIQTHLWNRDLERAYKLLNDRFPLDEELAEYSEAFILWGCYLALTGDRVVVKAHFSRCRYKYGKSALIGKCVDGDIFDYLDNLVWWEKKMTLFQSYFLLRCLNESPRRYEKYRQAYLSMENNFFD</sequence>